<dbReference type="EMBL" id="X04567">
    <property type="protein sequence ID" value="CAA28228.1"/>
    <property type="molecule type" value="Genomic_DNA"/>
</dbReference>
<dbReference type="EMBL" id="AF158101">
    <property type="protein sequence ID" value="AAD42672.1"/>
    <property type="molecule type" value="Genomic_DNA"/>
</dbReference>
<dbReference type="RefSeq" id="NP_049725.1">
    <property type="nucleotide sequence ID" value="NC_000866.4"/>
</dbReference>
<dbReference type="GeneID" id="1258653"/>
<dbReference type="KEGG" id="vg:1258653"/>
<dbReference type="OrthoDB" id="11578at10239"/>
<dbReference type="Proteomes" id="UP000009087">
    <property type="component" value="Segment"/>
</dbReference>
<dbReference type="Gene3D" id="1.10.530.10">
    <property type="match status" value="1"/>
</dbReference>
<dbReference type="InterPro" id="IPR023346">
    <property type="entry name" value="Lysozyme-like_dom_sf"/>
</dbReference>
<dbReference type="InterPro" id="IPR008258">
    <property type="entry name" value="Transglycosylase_SLT_dom_1"/>
</dbReference>
<dbReference type="Pfam" id="PF01464">
    <property type="entry name" value="SLT"/>
    <property type="match status" value="1"/>
</dbReference>
<dbReference type="SUPFAM" id="SSF53955">
    <property type="entry name" value="Lysozyme-like"/>
    <property type="match status" value="1"/>
</dbReference>
<protein>
    <recommendedName>
        <fullName>Uncharacterized 20.7 kDa protein in vs-regB intergenic region</fullName>
    </recommendedName>
</protein>
<proteinExistence type="predicted"/>
<name>Y06E_BPT4</name>
<organism>
    <name type="scientific">Enterobacteria phage T4</name>
    <name type="common">Bacteriophage T4</name>
    <dbReference type="NCBI Taxonomy" id="10665"/>
    <lineage>
        <taxon>Viruses</taxon>
        <taxon>Duplodnaviria</taxon>
        <taxon>Heunggongvirae</taxon>
        <taxon>Uroviricota</taxon>
        <taxon>Caudoviricetes</taxon>
        <taxon>Straboviridae</taxon>
        <taxon>Tevenvirinae</taxon>
        <taxon>Tequatrovirus</taxon>
    </lineage>
</organism>
<accession>P13311</accession>
<gene>
    <name type="primary">y06E</name>
    <name type="synonym">61.4</name>
    <name type="synonym">vs.1</name>
</gene>
<keyword id="KW-1185">Reference proteome</keyword>
<organismHost>
    <name type="scientific">Escherichia coli</name>
    <dbReference type="NCBI Taxonomy" id="562"/>
</organismHost>
<reference key="1">
    <citation type="journal article" date="1986" name="Nucleic Acids Res.">
        <title>Nucleotide sequence and analysis of the 58.3 to 65.5-kb early region of bacteriophage T4.</title>
        <authorList>
            <person name="Valerie K."/>
            <person name="Stevens J."/>
            <person name="Lynch M."/>
            <person name="Henderson E.E."/>
            <person name="de Riel J.K."/>
        </authorList>
    </citation>
    <scope>NUCLEOTIDE SEQUENCE [GENOMIC DNA]</scope>
</reference>
<reference key="2">
    <citation type="journal article" date="2003" name="Microbiol. Mol. Biol. Rev.">
        <title>Bacteriophage T4 genome.</title>
        <authorList>
            <person name="Miller E.S."/>
            <person name="Kutter E."/>
            <person name="Mosig G."/>
            <person name="Arisaka F."/>
            <person name="Kunisawa T."/>
            <person name="Ruger W."/>
        </authorList>
    </citation>
    <scope>NUCLEOTIDE SEQUENCE [LARGE SCALE GENOMIC DNA]</scope>
</reference>
<feature type="chain" id="PRO_0000165137" description="Uncharacterized 20.7 kDa protein in vs-regB intergenic region">
    <location>
        <begin position="1"/>
        <end position="181"/>
    </location>
</feature>
<sequence>MRKALLAGLLAISMMAHSSEHTFSNVQLDNMRYAYQFGEQFSKDGKYKTHKNIHKSGLGHIMAAILWQESSGGVNLKSKPKHHAYGMFQNYLPTMRARVKELGYNMTDAEIKRMLNKRSNSASWAYIELSYWLNIHKGDIRKAISSYNSGWNVKAGSKYASEVLEKANYLKNNKLLEIVND</sequence>